<comment type="subcellular location">
    <subcellularLocation>
        <location evidence="3">Membrane</location>
        <topology evidence="3">Single-pass membrane protein</topology>
    </subcellularLocation>
</comment>
<comment type="similarity">
    <text evidence="3">Belongs to the CYSTM1 family.</text>
</comment>
<accession>Q8K353</accession>
<accession>Q8BMU1</accession>
<sequence length="104" mass="11402">MNPENPPPYPGPGPTAPYPPYPQQPMGPMGPMGAPPPQGYPYPPPQGYPYQGYPQYGWQGGPQEPPKTTVYVVEDQRRDDLGPSTCLTACWTALCCCCLWDMLT</sequence>
<protein>
    <recommendedName>
        <fullName>Cysteine-rich and transmembrane domain-containing protein 1</fullName>
    </recommendedName>
</protein>
<proteinExistence type="evidence at protein level"/>
<name>CYTM1_MOUSE</name>
<reference key="1">
    <citation type="journal article" date="2005" name="Science">
        <title>The transcriptional landscape of the mammalian genome.</title>
        <authorList>
            <person name="Carninci P."/>
            <person name="Kasukawa T."/>
            <person name="Katayama S."/>
            <person name="Gough J."/>
            <person name="Frith M.C."/>
            <person name="Maeda N."/>
            <person name="Oyama R."/>
            <person name="Ravasi T."/>
            <person name="Lenhard B."/>
            <person name="Wells C."/>
            <person name="Kodzius R."/>
            <person name="Shimokawa K."/>
            <person name="Bajic V.B."/>
            <person name="Brenner S.E."/>
            <person name="Batalov S."/>
            <person name="Forrest A.R."/>
            <person name="Zavolan M."/>
            <person name="Davis M.J."/>
            <person name="Wilming L.G."/>
            <person name="Aidinis V."/>
            <person name="Allen J.E."/>
            <person name="Ambesi-Impiombato A."/>
            <person name="Apweiler R."/>
            <person name="Aturaliya R.N."/>
            <person name="Bailey T.L."/>
            <person name="Bansal M."/>
            <person name="Baxter L."/>
            <person name="Beisel K.W."/>
            <person name="Bersano T."/>
            <person name="Bono H."/>
            <person name="Chalk A.M."/>
            <person name="Chiu K.P."/>
            <person name="Choudhary V."/>
            <person name="Christoffels A."/>
            <person name="Clutterbuck D.R."/>
            <person name="Crowe M.L."/>
            <person name="Dalla E."/>
            <person name="Dalrymple B.P."/>
            <person name="de Bono B."/>
            <person name="Della Gatta G."/>
            <person name="di Bernardo D."/>
            <person name="Down T."/>
            <person name="Engstrom P."/>
            <person name="Fagiolini M."/>
            <person name="Faulkner G."/>
            <person name="Fletcher C.F."/>
            <person name="Fukushima T."/>
            <person name="Furuno M."/>
            <person name="Futaki S."/>
            <person name="Gariboldi M."/>
            <person name="Georgii-Hemming P."/>
            <person name="Gingeras T.R."/>
            <person name="Gojobori T."/>
            <person name="Green R.E."/>
            <person name="Gustincich S."/>
            <person name="Harbers M."/>
            <person name="Hayashi Y."/>
            <person name="Hensch T.K."/>
            <person name="Hirokawa N."/>
            <person name="Hill D."/>
            <person name="Huminiecki L."/>
            <person name="Iacono M."/>
            <person name="Ikeo K."/>
            <person name="Iwama A."/>
            <person name="Ishikawa T."/>
            <person name="Jakt M."/>
            <person name="Kanapin A."/>
            <person name="Katoh M."/>
            <person name="Kawasawa Y."/>
            <person name="Kelso J."/>
            <person name="Kitamura H."/>
            <person name="Kitano H."/>
            <person name="Kollias G."/>
            <person name="Krishnan S.P."/>
            <person name="Kruger A."/>
            <person name="Kummerfeld S.K."/>
            <person name="Kurochkin I.V."/>
            <person name="Lareau L.F."/>
            <person name="Lazarevic D."/>
            <person name="Lipovich L."/>
            <person name="Liu J."/>
            <person name="Liuni S."/>
            <person name="McWilliam S."/>
            <person name="Madan Babu M."/>
            <person name="Madera M."/>
            <person name="Marchionni L."/>
            <person name="Matsuda H."/>
            <person name="Matsuzawa S."/>
            <person name="Miki H."/>
            <person name="Mignone F."/>
            <person name="Miyake S."/>
            <person name="Morris K."/>
            <person name="Mottagui-Tabar S."/>
            <person name="Mulder N."/>
            <person name="Nakano N."/>
            <person name="Nakauchi H."/>
            <person name="Ng P."/>
            <person name="Nilsson R."/>
            <person name="Nishiguchi S."/>
            <person name="Nishikawa S."/>
            <person name="Nori F."/>
            <person name="Ohara O."/>
            <person name="Okazaki Y."/>
            <person name="Orlando V."/>
            <person name="Pang K.C."/>
            <person name="Pavan W.J."/>
            <person name="Pavesi G."/>
            <person name="Pesole G."/>
            <person name="Petrovsky N."/>
            <person name="Piazza S."/>
            <person name="Reed J."/>
            <person name="Reid J.F."/>
            <person name="Ring B.Z."/>
            <person name="Ringwald M."/>
            <person name="Rost B."/>
            <person name="Ruan Y."/>
            <person name="Salzberg S.L."/>
            <person name="Sandelin A."/>
            <person name="Schneider C."/>
            <person name="Schoenbach C."/>
            <person name="Sekiguchi K."/>
            <person name="Semple C.A."/>
            <person name="Seno S."/>
            <person name="Sessa L."/>
            <person name="Sheng Y."/>
            <person name="Shibata Y."/>
            <person name="Shimada H."/>
            <person name="Shimada K."/>
            <person name="Silva D."/>
            <person name="Sinclair B."/>
            <person name="Sperling S."/>
            <person name="Stupka E."/>
            <person name="Sugiura K."/>
            <person name="Sultana R."/>
            <person name="Takenaka Y."/>
            <person name="Taki K."/>
            <person name="Tammoja K."/>
            <person name="Tan S.L."/>
            <person name="Tang S."/>
            <person name="Taylor M.S."/>
            <person name="Tegner J."/>
            <person name="Teichmann S.A."/>
            <person name="Ueda H.R."/>
            <person name="van Nimwegen E."/>
            <person name="Verardo R."/>
            <person name="Wei C.L."/>
            <person name="Yagi K."/>
            <person name="Yamanishi H."/>
            <person name="Zabarovsky E."/>
            <person name="Zhu S."/>
            <person name="Zimmer A."/>
            <person name="Hide W."/>
            <person name="Bult C."/>
            <person name="Grimmond S.M."/>
            <person name="Teasdale R.D."/>
            <person name="Liu E.T."/>
            <person name="Brusic V."/>
            <person name="Quackenbush J."/>
            <person name="Wahlestedt C."/>
            <person name="Mattick J.S."/>
            <person name="Hume D.A."/>
            <person name="Kai C."/>
            <person name="Sasaki D."/>
            <person name="Tomaru Y."/>
            <person name="Fukuda S."/>
            <person name="Kanamori-Katayama M."/>
            <person name="Suzuki M."/>
            <person name="Aoki J."/>
            <person name="Arakawa T."/>
            <person name="Iida J."/>
            <person name="Imamura K."/>
            <person name="Itoh M."/>
            <person name="Kato T."/>
            <person name="Kawaji H."/>
            <person name="Kawagashira N."/>
            <person name="Kawashima T."/>
            <person name="Kojima M."/>
            <person name="Kondo S."/>
            <person name="Konno H."/>
            <person name="Nakano K."/>
            <person name="Ninomiya N."/>
            <person name="Nishio T."/>
            <person name="Okada M."/>
            <person name="Plessy C."/>
            <person name="Shibata K."/>
            <person name="Shiraki T."/>
            <person name="Suzuki S."/>
            <person name="Tagami M."/>
            <person name="Waki K."/>
            <person name="Watahiki A."/>
            <person name="Okamura-Oho Y."/>
            <person name="Suzuki H."/>
            <person name="Kawai J."/>
            <person name="Hayashizaki Y."/>
        </authorList>
    </citation>
    <scope>NUCLEOTIDE SEQUENCE [LARGE SCALE MRNA]</scope>
    <source>
        <strain>C57BL/6J</strain>
        <tissue>Embryo</tissue>
        <tissue>Placenta</tissue>
    </source>
</reference>
<reference key="2">
    <citation type="journal article" date="2004" name="Genome Res.">
        <title>The status, quality, and expansion of the NIH full-length cDNA project: the Mammalian Gene Collection (MGC).</title>
        <authorList>
            <consortium name="The MGC Project Team"/>
        </authorList>
    </citation>
    <scope>NUCLEOTIDE SEQUENCE [LARGE SCALE MRNA]</scope>
    <source>
        <strain>C57BL/6J</strain>
        <tissue>Mammary gland</tissue>
    </source>
</reference>
<reference key="3">
    <citation type="journal article" date="2010" name="Cell">
        <title>A tissue-specific atlas of mouse protein phosphorylation and expression.</title>
        <authorList>
            <person name="Huttlin E.L."/>
            <person name="Jedrychowski M.P."/>
            <person name="Elias J.E."/>
            <person name="Goswami T."/>
            <person name="Rad R."/>
            <person name="Beausoleil S.A."/>
            <person name="Villen J."/>
            <person name="Haas W."/>
            <person name="Sowa M.E."/>
            <person name="Gygi S.P."/>
        </authorList>
    </citation>
    <scope>IDENTIFICATION BY MASS SPECTROMETRY [LARGE SCALE ANALYSIS]</scope>
    <source>
        <tissue>Brain</tissue>
        <tissue>Kidney</tissue>
    </source>
</reference>
<keyword id="KW-0472">Membrane</keyword>
<keyword id="KW-1185">Reference proteome</keyword>
<keyword id="KW-0812">Transmembrane</keyword>
<keyword id="KW-1133">Transmembrane helix</keyword>
<organism>
    <name type="scientific">Mus musculus</name>
    <name type="common">Mouse</name>
    <dbReference type="NCBI Taxonomy" id="10090"/>
    <lineage>
        <taxon>Eukaryota</taxon>
        <taxon>Metazoa</taxon>
        <taxon>Chordata</taxon>
        <taxon>Craniata</taxon>
        <taxon>Vertebrata</taxon>
        <taxon>Euteleostomi</taxon>
        <taxon>Mammalia</taxon>
        <taxon>Eutheria</taxon>
        <taxon>Euarchontoglires</taxon>
        <taxon>Glires</taxon>
        <taxon>Rodentia</taxon>
        <taxon>Myomorpha</taxon>
        <taxon>Muroidea</taxon>
        <taxon>Muridae</taxon>
        <taxon>Murinae</taxon>
        <taxon>Mus</taxon>
        <taxon>Mus</taxon>
    </lineage>
</organism>
<evidence type="ECO:0000255" key="1"/>
<evidence type="ECO:0000256" key="2">
    <source>
        <dbReference type="SAM" id="MobiDB-lite"/>
    </source>
</evidence>
<evidence type="ECO:0000305" key="3"/>
<gene>
    <name type="primary">Cystm1</name>
</gene>
<dbReference type="EMBL" id="AK028217">
    <property type="protein sequence ID" value="BAC25820.1"/>
    <property type="molecule type" value="mRNA"/>
</dbReference>
<dbReference type="EMBL" id="AK167679">
    <property type="protein sequence ID" value="BAE39728.1"/>
    <property type="molecule type" value="mRNA"/>
</dbReference>
<dbReference type="EMBL" id="BC028765">
    <property type="protein sequence ID" value="AAH28765.1"/>
    <property type="molecule type" value="mRNA"/>
</dbReference>
<dbReference type="CCDS" id="CCDS89221.1"/>
<dbReference type="RefSeq" id="NP_001355566.1">
    <property type="nucleotide sequence ID" value="NM_001368637.1"/>
</dbReference>
<dbReference type="FunCoup" id="Q8K353">
    <property type="interactions" value="24"/>
</dbReference>
<dbReference type="STRING" id="10090.ENSMUSP00000158346"/>
<dbReference type="GlyGen" id="Q8K353">
    <property type="glycosylation" value="1 site"/>
</dbReference>
<dbReference type="PhosphoSitePlus" id="Q8K353"/>
<dbReference type="SwissPalm" id="Q8K353"/>
<dbReference type="jPOST" id="Q8K353"/>
<dbReference type="ProteomicsDB" id="277941"/>
<dbReference type="Antibodypedia" id="26841">
    <property type="antibodies" value="18 antibodies from 10 providers"/>
</dbReference>
<dbReference type="Ensembl" id="ENSMUST00000050584.10">
    <property type="protein sequence ID" value="ENSMUSP00000051708.4"/>
    <property type="gene ID" value="ENSMUSG00000046727.14"/>
</dbReference>
<dbReference type="Ensembl" id="ENSMUST00000235403.2">
    <property type="protein sequence ID" value="ENSMUSP00000157550.2"/>
    <property type="gene ID" value="ENSMUSG00000046727.14"/>
</dbReference>
<dbReference type="Ensembl" id="ENSMUST00000235864.2">
    <property type="protein sequence ID" value="ENSMUSP00000158380.2"/>
    <property type="gene ID" value="ENSMUSG00000046727.14"/>
</dbReference>
<dbReference type="Ensembl" id="ENSMUST00000236374.2">
    <property type="protein sequence ID" value="ENSMUSP00000157423.2"/>
    <property type="gene ID" value="ENSMUSG00000046727.14"/>
</dbReference>
<dbReference type="Ensembl" id="ENSMUST00000237375.2">
    <property type="protein sequence ID" value="ENSMUSP00000158042.2"/>
    <property type="gene ID" value="ENSMUSG00000046727.14"/>
</dbReference>
<dbReference type="GeneID" id="66060"/>
<dbReference type="UCSC" id="uc008enj.1">
    <property type="organism name" value="mouse"/>
</dbReference>
<dbReference type="AGR" id="MGI:1913310"/>
<dbReference type="MGI" id="MGI:1913310">
    <property type="gene designation" value="Cystm1"/>
</dbReference>
<dbReference type="VEuPathDB" id="HostDB:ENSMUSG00000046727"/>
<dbReference type="GeneTree" id="ENSGT00500000045016"/>
<dbReference type="HOGENOM" id="CLU_155323_0_0_1"/>
<dbReference type="InParanoid" id="Q8K353"/>
<dbReference type="Reactome" id="R-MMU-6798695">
    <property type="pathway name" value="Neutrophil degranulation"/>
</dbReference>
<dbReference type="ChiTaRS" id="Cystm1">
    <property type="organism name" value="mouse"/>
</dbReference>
<dbReference type="PRO" id="PR:Q8K353"/>
<dbReference type="Proteomes" id="UP000000589">
    <property type="component" value="Chromosome 18"/>
</dbReference>
<dbReference type="RNAct" id="Q8K353">
    <property type="molecule type" value="protein"/>
</dbReference>
<dbReference type="Bgee" id="ENSMUSG00000046727">
    <property type="expression patterns" value="Expressed in pyloric antrum and 252 other cell types or tissues"/>
</dbReference>
<dbReference type="ExpressionAtlas" id="Q8K353">
    <property type="expression patterns" value="baseline and differential"/>
</dbReference>
<dbReference type="GO" id="GO:0016020">
    <property type="term" value="C:membrane"/>
    <property type="evidence" value="ECO:0007669"/>
    <property type="project" value="UniProtKB-SubCell"/>
</dbReference>
<dbReference type="InterPro" id="IPR043240">
    <property type="entry name" value="CYSTM1-like"/>
</dbReference>
<dbReference type="PANTHER" id="PTHR47564">
    <property type="entry name" value="CYSTEINE-RICH AND TRANSMEMBRANE DOMAIN-CONTAINING PROTEIN 1"/>
    <property type="match status" value="1"/>
</dbReference>
<dbReference type="PANTHER" id="PTHR47564:SF1">
    <property type="entry name" value="CYSTEINE-RICH AND TRANSMEMBRANE DOMAIN-CONTAINING PROTEIN 1"/>
    <property type="match status" value="1"/>
</dbReference>
<feature type="chain" id="PRO_0000296359" description="Cysteine-rich and transmembrane domain-containing protein 1">
    <location>
        <begin position="1"/>
        <end position="104"/>
    </location>
</feature>
<feature type="transmembrane region" description="Helical" evidence="1">
    <location>
        <begin position="81"/>
        <end position="98"/>
    </location>
</feature>
<feature type="region of interest" description="Disordered" evidence="2">
    <location>
        <begin position="1"/>
        <end position="47"/>
    </location>
</feature>
<feature type="compositionally biased region" description="Pro residues" evidence="2">
    <location>
        <begin position="1"/>
        <end position="25"/>
    </location>
</feature>
<feature type="compositionally biased region" description="Pro residues" evidence="2">
    <location>
        <begin position="33"/>
        <end position="47"/>
    </location>
</feature>
<feature type="sequence conflict" description="In Ref. 1; BAC25820." evidence="3" ref="1">
    <original>G</original>
    <variation>R</variation>
    <location>
        <position position="39"/>
    </location>
</feature>